<comment type="function">
    <text evidence="1 2">Transcriptional activator, essential for early embryonic development and survival of embryonic stem cells (ESCs). Supports cell growth and survival during early development by transcriptionally activating the expression of the translation initiation factor EIF3B, to sustain global translation. Activates the transcription of FLNC.</text>
</comment>
<comment type="subcellular location">
    <subcellularLocation>
        <location evidence="2">Nucleus</location>
    </subcellularLocation>
</comment>
<comment type="domain">
    <text>The SET domain is degenerated, suggesting that it has lost methyltransferase activity.</text>
</comment>
<comment type="similarity">
    <text evidence="4">Belongs to the class V-like SAM-binding methyltransferase superfamily.</text>
</comment>
<organism>
    <name type="scientific">Pongo abelii</name>
    <name type="common">Sumatran orangutan</name>
    <name type="synonym">Pongo pygmaeus abelii</name>
    <dbReference type="NCBI Taxonomy" id="9601"/>
    <lineage>
        <taxon>Eukaryota</taxon>
        <taxon>Metazoa</taxon>
        <taxon>Chordata</taxon>
        <taxon>Craniata</taxon>
        <taxon>Vertebrata</taxon>
        <taxon>Euteleostomi</taxon>
        <taxon>Mammalia</taxon>
        <taxon>Eutheria</taxon>
        <taxon>Euarchontoglires</taxon>
        <taxon>Primates</taxon>
        <taxon>Haplorrhini</taxon>
        <taxon>Catarrhini</taxon>
        <taxon>Hominidae</taxon>
        <taxon>Pongo</taxon>
    </lineage>
</organism>
<sequence>MDSKDESSHVWPTSAEHEQNAAQVHFVPDTGTVAQIVYTDDQVRPPQQVVYTADGASYTSVDGPEHTLVYIHPVEAAQTLFTDPGQVAYVQQDATAQQTPLGGLEAKEEEDEDEDEDTEEDEEEDGEDADLDDWEPDPPRPFDPHDLWCEECNNAHSSVCPKHGPLHPIPNRPVLTRARASLPLVLYIDRFLGGVFSKRRIPKRTQLGPVEGPLVRGSELKDCYIHLKVSLDKGDRKDRDLHEDLWFELSDETLCNWMMFVRPAQNHLEQNLVAYQYGHHVYYTTIKNVEPKQELKVWYAASYAEFVNQKIHDISEEERKVLREQEKNWPCYECNRRFISSEQLQQHLNSHDEKLDVFSRTRGRGRGRGKRRFGPGRRPGRPPKFIRLEITSENGEKSDDGTQDLLHFPTKEQFDEAEPATLNGLDQPEQTTIPIPQLPQETQSSLEHEPETHTLHLQPQHEESVVPTQSTLTADDMRRAKRIRNAALQHLFIRKSFRPFKCLQCGKAFREKDKLDQHLRFHGREGNCPLTCDLCNKGFISSASLESHMKLHSDQKTYSCIFCPESFDRLDLLKDHVAIHINDGYFTCPTCKKRFPDFIQVKKHVRSFHSEKIYQCTECDKAFCRPDKLRLHMLRHSDRKDFLCSTCGKQFKRKDKLREHMQRMHNPEREAKKADRISRSKTFKPRITSTDYDSFTFKCRLCMMGFRRRGMLVNHLSKRHPDMKIEEVPELTLPIIKPNRDYFCQYCDKVYKSASKRKAHILKNHPGAELPPSIRKLRPAGPGEPDPMLSTHTQLTGTIATPPVCCPHCSKQYSSKTKMVQHIRKKHPEFAQLSSTIHTPLTTAVISATPAVLTTDSATGETVVTTDLLTQAMTELSQTLTTDYRTPQGDYQRIQYIPVSQSASGLQQPQHIQLQVVQVAPATSPHQSQQSTVDVGQLHDPQPYPQHAIQVQHIQVSGQPLSPSAQQAQQGLSPSHIQGSSSTQGQALQQQQQQQQNSSVQHTYLPSAWNSFRGYSSEIQMMTLPPGQFVITDSGVATPVTTGQVKAVTSGHYVLSESQSDLEEKQTSALSGGVQVQPPAHSDSLDPQTTSQQQTTQYIITTTTNGNGSSEVHITKP</sequence>
<name>PRD10_PONAB</name>
<dbReference type="EMBL" id="CR858882">
    <property type="protein sequence ID" value="CAH91081.1"/>
    <property type="molecule type" value="mRNA"/>
</dbReference>
<dbReference type="RefSeq" id="NP_001125628.1">
    <property type="nucleotide sequence ID" value="NM_001132156.1"/>
</dbReference>
<dbReference type="SMR" id="Q5RAX9"/>
<dbReference type="STRING" id="9601.ENSPPYP00000004643"/>
<dbReference type="GeneID" id="100172546"/>
<dbReference type="KEGG" id="pon:100172546"/>
<dbReference type="CTD" id="56980"/>
<dbReference type="eggNOG" id="KOG1721">
    <property type="taxonomic scope" value="Eukaryota"/>
</dbReference>
<dbReference type="InParanoid" id="Q5RAX9"/>
<dbReference type="OrthoDB" id="3535323at2759"/>
<dbReference type="Proteomes" id="UP000001595">
    <property type="component" value="Unplaced"/>
</dbReference>
<dbReference type="GO" id="GO:0000785">
    <property type="term" value="C:chromatin"/>
    <property type="evidence" value="ECO:0000250"/>
    <property type="project" value="UniProtKB"/>
</dbReference>
<dbReference type="GO" id="GO:0005634">
    <property type="term" value="C:nucleus"/>
    <property type="evidence" value="ECO:0000250"/>
    <property type="project" value="UniProtKB"/>
</dbReference>
<dbReference type="GO" id="GO:0003677">
    <property type="term" value="F:DNA binding"/>
    <property type="evidence" value="ECO:0007669"/>
    <property type="project" value="UniProtKB-KW"/>
</dbReference>
<dbReference type="GO" id="GO:0003700">
    <property type="term" value="F:DNA-binding transcription factor activity"/>
    <property type="evidence" value="ECO:0000250"/>
    <property type="project" value="UniProtKB"/>
</dbReference>
<dbReference type="GO" id="GO:0008168">
    <property type="term" value="F:methyltransferase activity"/>
    <property type="evidence" value="ECO:0007669"/>
    <property type="project" value="UniProtKB-KW"/>
</dbReference>
<dbReference type="GO" id="GO:0008270">
    <property type="term" value="F:zinc ion binding"/>
    <property type="evidence" value="ECO:0007669"/>
    <property type="project" value="UniProtKB-KW"/>
</dbReference>
<dbReference type="GO" id="GO:0032259">
    <property type="term" value="P:methylation"/>
    <property type="evidence" value="ECO:0007669"/>
    <property type="project" value="UniProtKB-KW"/>
</dbReference>
<dbReference type="GO" id="GO:0045893">
    <property type="term" value="P:positive regulation of DNA-templated transcription"/>
    <property type="evidence" value="ECO:0000250"/>
    <property type="project" value="UniProtKB"/>
</dbReference>
<dbReference type="GO" id="GO:0045944">
    <property type="term" value="P:positive regulation of transcription by RNA polymerase II"/>
    <property type="evidence" value="ECO:0007669"/>
    <property type="project" value="TreeGrafter"/>
</dbReference>
<dbReference type="CDD" id="cd19194">
    <property type="entry name" value="PR-SET_PRDM10"/>
    <property type="match status" value="1"/>
</dbReference>
<dbReference type="FunFam" id="2.170.270.10:FF:000007">
    <property type="entry name" value="PR domain zinc finger protein 10"/>
    <property type="match status" value="1"/>
</dbReference>
<dbReference type="FunFam" id="3.30.160.60:FF:000287">
    <property type="entry name" value="PR domain zinc finger protein 10"/>
    <property type="match status" value="1"/>
</dbReference>
<dbReference type="FunFam" id="3.30.160.60:FF:000300">
    <property type="entry name" value="PR domain zinc finger protein 10"/>
    <property type="match status" value="1"/>
</dbReference>
<dbReference type="FunFam" id="3.30.160.60:FF:000347">
    <property type="entry name" value="PR domain zinc finger protein 10"/>
    <property type="match status" value="1"/>
</dbReference>
<dbReference type="FunFam" id="3.30.160.60:FF:000411">
    <property type="entry name" value="PR domain zinc finger protein 10"/>
    <property type="match status" value="1"/>
</dbReference>
<dbReference type="FunFam" id="3.30.160.60:FF:000413">
    <property type="entry name" value="PR domain zinc finger protein 10"/>
    <property type="match status" value="1"/>
</dbReference>
<dbReference type="FunFam" id="3.30.160.60:FF:000428">
    <property type="entry name" value="PR domain zinc finger protein 10"/>
    <property type="match status" value="1"/>
</dbReference>
<dbReference type="Gene3D" id="3.30.160.60">
    <property type="entry name" value="Classic Zinc Finger"/>
    <property type="match status" value="7"/>
</dbReference>
<dbReference type="Gene3D" id="2.170.270.10">
    <property type="entry name" value="SET domain"/>
    <property type="match status" value="1"/>
</dbReference>
<dbReference type="InterPro" id="IPR044403">
    <property type="entry name" value="PRDM10_PR/SET"/>
</dbReference>
<dbReference type="InterPro" id="IPR001214">
    <property type="entry name" value="SET_dom"/>
</dbReference>
<dbReference type="InterPro" id="IPR046341">
    <property type="entry name" value="SET_dom_sf"/>
</dbReference>
<dbReference type="InterPro" id="IPR050688">
    <property type="entry name" value="Zinc_finger/UBP_domain"/>
</dbReference>
<dbReference type="InterPro" id="IPR036236">
    <property type="entry name" value="Znf_C2H2_sf"/>
</dbReference>
<dbReference type="InterPro" id="IPR013087">
    <property type="entry name" value="Znf_C2H2_type"/>
</dbReference>
<dbReference type="PANTHER" id="PTHR24403:SF48">
    <property type="entry name" value="PR DOMAIN ZINC FINGER PROTEIN 10"/>
    <property type="match status" value="1"/>
</dbReference>
<dbReference type="PANTHER" id="PTHR24403">
    <property type="entry name" value="ZINC FINGER PROTEIN"/>
    <property type="match status" value="1"/>
</dbReference>
<dbReference type="Pfam" id="PF21549">
    <property type="entry name" value="PRDM2_PR"/>
    <property type="match status" value="1"/>
</dbReference>
<dbReference type="Pfam" id="PF00096">
    <property type="entry name" value="zf-C2H2"/>
    <property type="match status" value="5"/>
</dbReference>
<dbReference type="Pfam" id="PF12874">
    <property type="entry name" value="zf-met"/>
    <property type="match status" value="1"/>
</dbReference>
<dbReference type="SMART" id="SM00355">
    <property type="entry name" value="ZnF_C2H2"/>
    <property type="match status" value="10"/>
</dbReference>
<dbReference type="SUPFAM" id="SSF57667">
    <property type="entry name" value="beta-beta-alpha zinc fingers"/>
    <property type="match status" value="4"/>
</dbReference>
<dbReference type="SUPFAM" id="SSF82199">
    <property type="entry name" value="SET domain"/>
    <property type="match status" value="1"/>
</dbReference>
<dbReference type="PROSITE" id="PS50280">
    <property type="entry name" value="SET"/>
    <property type="match status" value="1"/>
</dbReference>
<dbReference type="PROSITE" id="PS00028">
    <property type="entry name" value="ZINC_FINGER_C2H2_1"/>
    <property type="match status" value="10"/>
</dbReference>
<dbReference type="PROSITE" id="PS50157">
    <property type="entry name" value="ZINC_FINGER_C2H2_2"/>
    <property type="match status" value="10"/>
</dbReference>
<gene>
    <name type="primary">PRDM10</name>
</gene>
<keyword id="KW-0010">Activator</keyword>
<keyword id="KW-0238">DNA-binding</keyword>
<keyword id="KW-1017">Isopeptide bond</keyword>
<keyword id="KW-0479">Metal-binding</keyword>
<keyword id="KW-0539">Nucleus</keyword>
<keyword id="KW-0597">Phosphoprotein</keyword>
<keyword id="KW-1185">Reference proteome</keyword>
<keyword id="KW-0677">Repeat</keyword>
<keyword id="KW-0804">Transcription</keyword>
<keyword id="KW-0805">Transcription regulation</keyword>
<keyword id="KW-0832">Ubl conjugation</keyword>
<keyword id="KW-0862">Zinc</keyword>
<keyword id="KW-0863">Zinc-finger</keyword>
<proteinExistence type="evidence at transcript level"/>
<feature type="chain" id="PRO_0000363964" description="PR domain zinc finger protein 10">
    <location>
        <begin position="1"/>
        <end position="1117"/>
    </location>
</feature>
<feature type="domain" description="SET" evidence="4">
    <location>
        <begin position="182"/>
        <end position="300"/>
    </location>
</feature>
<feature type="zinc finger region" description="C2H2-type 1" evidence="3">
    <location>
        <begin position="329"/>
        <end position="351"/>
    </location>
</feature>
<feature type="zinc finger region" description="C2H2-type 2" evidence="3">
    <location>
        <begin position="500"/>
        <end position="522"/>
    </location>
</feature>
<feature type="zinc finger region" description="C2H2-type 3" evidence="3">
    <location>
        <begin position="530"/>
        <end position="552"/>
    </location>
</feature>
<feature type="zinc finger region" description="C2H2-type 4" evidence="3">
    <location>
        <begin position="558"/>
        <end position="580"/>
    </location>
</feature>
<feature type="zinc finger region" description="C2H2-type 5" evidence="3">
    <location>
        <begin position="586"/>
        <end position="609"/>
    </location>
</feature>
<feature type="zinc finger region" description="C2H2-type 6" evidence="3">
    <location>
        <begin position="614"/>
        <end position="636"/>
    </location>
</feature>
<feature type="zinc finger region" description="C2H2-type 7" evidence="3">
    <location>
        <begin position="642"/>
        <end position="665"/>
    </location>
</feature>
<feature type="zinc finger region" description="C2H2-type 8" evidence="3">
    <location>
        <begin position="697"/>
        <end position="720"/>
    </location>
</feature>
<feature type="zinc finger region" description="C2H2-type 9" evidence="3">
    <location>
        <begin position="742"/>
        <end position="765"/>
    </location>
</feature>
<feature type="zinc finger region" description="C2H2-type 10" evidence="3">
    <location>
        <begin position="804"/>
        <end position="827"/>
    </location>
</feature>
<feature type="region of interest" description="Disordered" evidence="5">
    <location>
        <begin position="97"/>
        <end position="142"/>
    </location>
</feature>
<feature type="region of interest" description="N-terminal PR domain; essential for transcriptional activator activity" evidence="1">
    <location>
        <begin position="201"/>
        <end position="305"/>
    </location>
</feature>
<feature type="region of interest" description="Disordered" evidence="5">
    <location>
        <begin position="361"/>
        <end position="386"/>
    </location>
</feature>
<feature type="region of interest" description="Disordered" evidence="5">
    <location>
        <begin position="440"/>
        <end position="474"/>
    </location>
</feature>
<feature type="region of interest" description="C-terminal glutamine-rich region; essential for transcriptional activator activity" evidence="1">
    <location>
        <begin position="871"/>
        <end position="1097"/>
    </location>
</feature>
<feature type="region of interest" description="Disordered" evidence="5">
    <location>
        <begin position="919"/>
        <end position="943"/>
    </location>
</feature>
<feature type="region of interest" description="Disordered" evidence="5">
    <location>
        <begin position="958"/>
        <end position="1001"/>
    </location>
</feature>
<feature type="region of interest" description="Disordered" evidence="5">
    <location>
        <begin position="1066"/>
        <end position="1094"/>
    </location>
</feature>
<feature type="compositionally biased region" description="Acidic residues" evidence="5">
    <location>
        <begin position="107"/>
        <end position="136"/>
    </location>
</feature>
<feature type="compositionally biased region" description="Basic residues" evidence="5">
    <location>
        <begin position="361"/>
        <end position="381"/>
    </location>
</feature>
<feature type="compositionally biased region" description="Basic and acidic residues" evidence="5">
    <location>
        <begin position="446"/>
        <end position="464"/>
    </location>
</feature>
<feature type="compositionally biased region" description="Polar residues" evidence="5">
    <location>
        <begin position="924"/>
        <end position="934"/>
    </location>
</feature>
<feature type="modified residue" description="Phosphoserine" evidence="2">
    <location>
        <position position="398"/>
    </location>
</feature>
<feature type="modified residue" description="Phosphothreonine" evidence="2">
    <location>
        <position position="402"/>
    </location>
</feature>
<feature type="cross-link" description="Glycyl lysine isopeptide (Lys-Gly) (interchain with G-Cter in SUMO2)" evidence="2">
    <location>
        <position position="354"/>
    </location>
</feature>
<accession>Q5RAX9</accession>
<evidence type="ECO:0000250" key="1">
    <source>
        <dbReference type="UniProtKB" id="Q3UTQ7"/>
    </source>
</evidence>
<evidence type="ECO:0000250" key="2">
    <source>
        <dbReference type="UniProtKB" id="Q9NQV6"/>
    </source>
</evidence>
<evidence type="ECO:0000255" key="3">
    <source>
        <dbReference type="PROSITE-ProRule" id="PRU00042"/>
    </source>
</evidence>
<evidence type="ECO:0000255" key="4">
    <source>
        <dbReference type="PROSITE-ProRule" id="PRU00190"/>
    </source>
</evidence>
<evidence type="ECO:0000256" key="5">
    <source>
        <dbReference type="SAM" id="MobiDB-lite"/>
    </source>
</evidence>
<reference key="1">
    <citation type="submission" date="2004-11" db="EMBL/GenBank/DDBJ databases">
        <authorList>
            <consortium name="The German cDNA consortium"/>
        </authorList>
    </citation>
    <scope>NUCLEOTIDE SEQUENCE [LARGE SCALE MRNA]</scope>
    <source>
        <tissue>Kidney</tissue>
    </source>
</reference>
<protein>
    <recommendedName>
        <fullName>PR domain zinc finger protein 10</fullName>
    </recommendedName>
    <alternativeName>
        <fullName>PR domain-containing protein 10</fullName>
    </alternativeName>
</protein>